<gene>
    <name evidence="1" type="primary">rpoB</name>
    <name type="ordered locus">mma_3420</name>
</gene>
<keyword id="KW-0240">DNA-directed RNA polymerase</keyword>
<keyword id="KW-0548">Nucleotidyltransferase</keyword>
<keyword id="KW-0804">Transcription</keyword>
<keyword id="KW-0808">Transferase</keyword>
<proteinExistence type="inferred from homology"/>
<accession>A6T3L3</accession>
<dbReference type="EC" id="2.7.7.6" evidence="1"/>
<dbReference type="EMBL" id="CP000269">
    <property type="protein sequence ID" value="ABR88926.1"/>
    <property type="status" value="ALT_INIT"/>
    <property type="molecule type" value="Genomic_DNA"/>
</dbReference>
<dbReference type="RefSeq" id="WP_041296708.1">
    <property type="nucleotide sequence ID" value="NC_009659.1"/>
</dbReference>
<dbReference type="SMR" id="A6T3L3"/>
<dbReference type="STRING" id="375286.mma_3420"/>
<dbReference type="KEGG" id="mms:mma_3420"/>
<dbReference type="eggNOG" id="COG0085">
    <property type="taxonomic scope" value="Bacteria"/>
</dbReference>
<dbReference type="HOGENOM" id="CLU_000524_4_1_4"/>
<dbReference type="OrthoDB" id="9803954at2"/>
<dbReference type="Proteomes" id="UP000006388">
    <property type="component" value="Chromosome"/>
</dbReference>
<dbReference type="GO" id="GO:0000428">
    <property type="term" value="C:DNA-directed RNA polymerase complex"/>
    <property type="evidence" value="ECO:0007669"/>
    <property type="project" value="UniProtKB-KW"/>
</dbReference>
<dbReference type="GO" id="GO:0003677">
    <property type="term" value="F:DNA binding"/>
    <property type="evidence" value="ECO:0007669"/>
    <property type="project" value="UniProtKB-UniRule"/>
</dbReference>
<dbReference type="GO" id="GO:0003899">
    <property type="term" value="F:DNA-directed RNA polymerase activity"/>
    <property type="evidence" value="ECO:0007669"/>
    <property type="project" value="UniProtKB-UniRule"/>
</dbReference>
<dbReference type="GO" id="GO:0032549">
    <property type="term" value="F:ribonucleoside binding"/>
    <property type="evidence" value="ECO:0007669"/>
    <property type="project" value="InterPro"/>
</dbReference>
<dbReference type="GO" id="GO:0006351">
    <property type="term" value="P:DNA-templated transcription"/>
    <property type="evidence" value="ECO:0007669"/>
    <property type="project" value="UniProtKB-UniRule"/>
</dbReference>
<dbReference type="CDD" id="cd00653">
    <property type="entry name" value="RNA_pol_B_RPB2"/>
    <property type="match status" value="1"/>
</dbReference>
<dbReference type="FunFam" id="2.40.50.100:FF:000006">
    <property type="entry name" value="DNA-directed RNA polymerase subunit beta"/>
    <property type="match status" value="1"/>
</dbReference>
<dbReference type="FunFam" id="2.40.50.150:FF:000001">
    <property type="entry name" value="DNA-directed RNA polymerase subunit beta"/>
    <property type="match status" value="1"/>
</dbReference>
<dbReference type="FunFam" id="3.90.1800.10:FF:000001">
    <property type="entry name" value="DNA-directed RNA polymerase subunit beta"/>
    <property type="match status" value="1"/>
</dbReference>
<dbReference type="Gene3D" id="2.40.50.100">
    <property type="match status" value="1"/>
</dbReference>
<dbReference type="Gene3D" id="2.40.50.150">
    <property type="match status" value="1"/>
</dbReference>
<dbReference type="Gene3D" id="3.90.1100.10">
    <property type="match status" value="1"/>
</dbReference>
<dbReference type="Gene3D" id="2.30.150.10">
    <property type="entry name" value="DNA-directed RNA polymerase, beta subunit, external 1 domain"/>
    <property type="match status" value="1"/>
</dbReference>
<dbReference type="Gene3D" id="2.40.270.10">
    <property type="entry name" value="DNA-directed RNA polymerase, subunit 2, domain 6"/>
    <property type="match status" value="1"/>
</dbReference>
<dbReference type="Gene3D" id="3.90.1800.10">
    <property type="entry name" value="RNA polymerase alpha subunit dimerisation domain"/>
    <property type="match status" value="1"/>
</dbReference>
<dbReference type="Gene3D" id="3.90.1110.10">
    <property type="entry name" value="RNA polymerase Rpb2, domain 2"/>
    <property type="match status" value="1"/>
</dbReference>
<dbReference type="HAMAP" id="MF_01321">
    <property type="entry name" value="RNApol_bact_RpoB"/>
    <property type="match status" value="1"/>
</dbReference>
<dbReference type="InterPro" id="IPR042107">
    <property type="entry name" value="DNA-dir_RNA_pol_bsu_ext_1_sf"/>
</dbReference>
<dbReference type="InterPro" id="IPR019462">
    <property type="entry name" value="DNA-dir_RNA_pol_bsu_external_1"/>
</dbReference>
<dbReference type="InterPro" id="IPR015712">
    <property type="entry name" value="DNA-dir_RNA_pol_su2"/>
</dbReference>
<dbReference type="InterPro" id="IPR007120">
    <property type="entry name" value="DNA-dir_RNAP_su2_dom"/>
</dbReference>
<dbReference type="InterPro" id="IPR037033">
    <property type="entry name" value="DNA-dir_RNAP_su2_hyb_sf"/>
</dbReference>
<dbReference type="InterPro" id="IPR010243">
    <property type="entry name" value="RNA_pol_bsu_bac"/>
</dbReference>
<dbReference type="InterPro" id="IPR007121">
    <property type="entry name" value="RNA_pol_bsu_CS"/>
</dbReference>
<dbReference type="InterPro" id="IPR007644">
    <property type="entry name" value="RNA_pol_bsu_protrusion"/>
</dbReference>
<dbReference type="InterPro" id="IPR007642">
    <property type="entry name" value="RNA_pol_Rpb2_2"/>
</dbReference>
<dbReference type="InterPro" id="IPR037034">
    <property type="entry name" value="RNA_pol_Rpb2_2_sf"/>
</dbReference>
<dbReference type="InterPro" id="IPR007645">
    <property type="entry name" value="RNA_pol_Rpb2_3"/>
</dbReference>
<dbReference type="InterPro" id="IPR007641">
    <property type="entry name" value="RNA_pol_Rpb2_7"/>
</dbReference>
<dbReference type="InterPro" id="IPR014724">
    <property type="entry name" value="RNA_pol_RPB2_OB-fold"/>
</dbReference>
<dbReference type="NCBIfam" id="NF001616">
    <property type="entry name" value="PRK00405.1"/>
    <property type="match status" value="1"/>
</dbReference>
<dbReference type="NCBIfam" id="TIGR02013">
    <property type="entry name" value="rpoB"/>
    <property type="match status" value="1"/>
</dbReference>
<dbReference type="PANTHER" id="PTHR20856">
    <property type="entry name" value="DNA-DIRECTED RNA POLYMERASE I SUBUNIT 2"/>
    <property type="match status" value="1"/>
</dbReference>
<dbReference type="Pfam" id="PF04563">
    <property type="entry name" value="RNA_pol_Rpb2_1"/>
    <property type="match status" value="1"/>
</dbReference>
<dbReference type="Pfam" id="PF04561">
    <property type="entry name" value="RNA_pol_Rpb2_2"/>
    <property type="match status" value="2"/>
</dbReference>
<dbReference type="Pfam" id="PF04565">
    <property type="entry name" value="RNA_pol_Rpb2_3"/>
    <property type="match status" value="1"/>
</dbReference>
<dbReference type="Pfam" id="PF10385">
    <property type="entry name" value="RNA_pol_Rpb2_45"/>
    <property type="match status" value="1"/>
</dbReference>
<dbReference type="Pfam" id="PF00562">
    <property type="entry name" value="RNA_pol_Rpb2_6"/>
    <property type="match status" value="1"/>
</dbReference>
<dbReference type="Pfam" id="PF04560">
    <property type="entry name" value="RNA_pol_Rpb2_7"/>
    <property type="match status" value="1"/>
</dbReference>
<dbReference type="SUPFAM" id="SSF64484">
    <property type="entry name" value="beta and beta-prime subunits of DNA dependent RNA-polymerase"/>
    <property type="match status" value="1"/>
</dbReference>
<dbReference type="PROSITE" id="PS01166">
    <property type="entry name" value="RNA_POL_BETA"/>
    <property type="match status" value="1"/>
</dbReference>
<evidence type="ECO:0000255" key="1">
    <source>
        <dbReference type="HAMAP-Rule" id="MF_01321"/>
    </source>
</evidence>
<evidence type="ECO:0000305" key="2"/>
<organism>
    <name type="scientific">Janthinobacterium sp. (strain Marseille)</name>
    <name type="common">Minibacterium massiliensis</name>
    <dbReference type="NCBI Taxonomy" id="375286"/>
    <lineage>
        <taxon>Bacteria</taxon>
        <taxon>Pseudomonadati</taxon>
        <taxon>Pseudomonadota</taxon>
        <taxon>Betaproteobacteria</taxon>
        <taxon>Burkholderiales</taxon>
        <taxon>Oxalobacteraceae</taxon>
        <taxon>Janthinobacterium</taxon>
    </lineage>
</organism>
<feature type="chain" id="PRO_0000329180" description="DNA-directed RNA polymerase subunit beta">
    <location>
        <begin position="1"/>
        <end position="1368"/>
    </location>
</feature>
<protein>
    <recommendedName>
        <fullName evidence="1">DNA-directed RNA polymerase subunit beta</fullName>
        <shortName evidence="1">RNAP subunit beta</shortName>
        <ecNumber evidence="1">2.7.7.6</ecNumber>
    </recommendedName>
    <alternativeName>
        <fullName evidence="1">RNA polymerase subunit beta</fullName>
    </alternativeName>
    <alternativeName>
        <fullName evidence="1">Transcriptase subunit beta</fullName>
    </alternativeName>
</protein>
<comment type="function">
    <text evidence="1">DNA-dependent RNA polymerase catalyzes the transcription of DNA into RNA using the four ribonucleoside triphosphates as substrates.</text>
</comment>
<comment type="catalytic activity">
    <reaction evidence="1">
        <text>RNA(n) + a ribonucleoside 5'-triphosphate = RNA(n+1) + diphosphate</text>
        <dbReference type="Rhea" id="RHEA:21248"/>
        <dbReference type="Rhea" id="RHEA-COMP:14527"/>
        <dbReference type="Rhea" id="RHEA-COMP:17342"/>
        <dbReference type="ChEBI" id="CHEBI:33019"/>
        <dbReference type="ChEBI" id="CHEBI:61557"/>
        <dbReference type="ChEBI" id="CHEBI:140395"/>
        <dbReference type="EC" id="2.7.7.6"/>
    </reaction>
</comment>
<comment type="subunit">
    <text evidence="1">The RNAP catalytic core consists of 2 alpha, 1 beta, 1 beta' and 1 omega subunit. When a sigma factor is associated with the core the holoenzyme is formed, which can initiate transcription.</text>
</comment>
<comment type="similarity">
    <text evidence="1">Belongs to the RNA polymerase beta chain family.</text>
</comment>
<comment type="sequence caution" evidence="2">
    <conflict type="erroneous initiation">
        <sequence resource="EMBL-CDS" id="ABR88926"/>
    </conflict>
</comment>
<name>RPOB_JANMA</name>
<reference key="1">
    <citation type="journal article" date="2007" name="PLoS Genet.">
        <title>Genome analysis of Minibacterium massiliensis highlights the convergent evolution of water-living bacteria.</title>
        <authorList>
            <person name="Audic S."/>
            <person name="Robert C."/>
            <person name="Campagna B."/>
            <person name="Parinello H."/>
            <person name="Claverie J.-M."/>
            <person name="Raoult D."/>
            <person name="Drancourt M."/>
        </authorList>
    </citation>
    <scope>NUCLEOTIDE SEQUENCE [LARGE SCALE GENOMIC DNA]</scope>
    <source>
        <strain>Marseille</strain>
    </source>
</reference>
<sequence length="1368" mass="152387">MHYSFTEKKRIRKSFAKRANVHNVPFLLATQLESYHGFLQEDKIPSQRKNEGLQSAFTSIFPIVSHNGFARLEFLSYVLGDPPFNIKECQQRGLTYASPLRAKVRLVILDKESPTKPVVKEMKEQEVYMGELPLMTSTGSFVINGTERVIVSQLHRSPGVFFEHDRGKTHSSGKLLFSARIIPYRGSWLDYEFDPKDILFFRVDRRRKMPVTILLKAIGMTPEQILENFFVFDDFALHADGAEMAFVAERLRGEVARFDITDKAGKVLVAKDKRINSKHVRDVEAAGIKNISVPEDYLLGRILAKNIVDKETGEVIANANDELTEDLLARLREGKVTHIQTLYTNDLDQGGYISQTLRMDDTTDQMAAKVAIYRMMRPGEPPTEDSVEALFNGLFYNADRYDLSAVGRMKFNRRIGRDELTGDMTLSNDDVLAVIKILVELRNGRGEVDDIDHLGNRRVRCVGELAENQFRAGLVRVERAVKERLGQAEADNLMPHDLINSKPISAAIREFFGSSQLSQFMDQTNPLSEITHKRRVSALGPGGLTRERAGFEVRDVHPTHYGRVCPIETPEGPNIGLINSLALYARLNEYGFLETPYRKVEGSKITDQIDYLSAIEEGRYIIAQANATIDKSGALSDELVSAREAGETILVSPERVQYMDVAPGQVVSVAASLIPFLEHDDANRALMGANMQRQAVPCLRPEKAFVGTGIERTVAVDSGTTVQALRGGIVDYIDAGRVVIRVNDDEAQAGEVGVDIYNLIKYTRSNQNTNINQRPIVQVGDRVAKHDVIADGASTDLGELALGQNMLVAFMPWNGYNFEDSILISEKVVADDRYTSIHIEELSVVARDTKLGAEEITRDISNLAENQLARLDESGIVYIGAEVTAGDTLVGKVTPKGETQLTPEEKLLRAIFGEKASDVKDTSLRVPSGMVGTVIDVQVFTREGIPRDKRAQQIIDDELQRYRLDLNDQLRIVEGDAFQRLEKMLIGKVVNGGPKKIAKGAKITKEYLDDLDKYHWFDIRPADDTSANALEAIKESIAEKRHQFDLAFEEKRKKLTQGDELPPGVQKMVKVYLAVKRRLQPGDKMAGRHGNKGVVSRILPIEDMPHMADGTPADVVLNPLGVPSRMNVGQVLEVHLGWAAKGLGLRIGEMLNAQVQIAELRKFLAAIYNESGKTEDLDSFSDAEILELAGNLKNGVPFATPVFDGADEGETRRMLDLAYPDHIAKQLGMTASKNQVTMYDGRTGEAFERTVTVGYMHYLKLHHLVDDKMHARSTGPYSLVTQQPLGGKAQFGGQRFGEMEVWALEAYGASYVLQEMLTVKSDDVNGRTKVYENLVKGDHVIDAGMPESFNVLVKEIRSLGIDIDLERD</sequence>